<reference key="1">
    <citation type="journal article" date="1997" name="Nature">
        <title>The complete genome sequence of the hyperthermophilic, sulphate-reducing archaeon Archaeoglobus fulgidus.</title>
        <authorList>
            <person name="Klenk H.-P."/>
            <person name="Clayton R.A."/>
            <person name="Tomb J.-F."/>
            <person name="White O."/>
            <person name="Nelson K.E."/>
            <person name="Ketchum K.A."/>
            <person name="Dodson R.J."/>
            <person name="Gwinn M.L."/>
            <person name="Hickey E.K."/>
            <person name="Peterson J.D."/>
            <person name="Richardson D.L."/>
            <person name="Kerlavage A.R."/>
            <person name="Graham D.E."/>
            <person name="Kyrpides N.C."/>
            <person name="Fleischmann R.D."/>
            <person name="Quackenbush J."/>
            <person name="Lee N.H."/>
            <person name="Sutton G.G."/>
            <person name="Gill S.R."/>
            <person name="Kirkness E.F."/>
            <person name="Dougherty B.A."/>
            <person name="McKenney K."/>
            <person name="Adams M.D."/>
            <person name="Loftus B.J."/>
            <person name="Peterson S.N."/>
            <person name="Reich C.I."/>
            <person name="McNeil L.K."/>
            <person name="Badger J.H."/>
            <person name="Glodek A."/>
            <person name="Zhou L."/>
            <person name="Overbeek R."/>
            <person name="Gocayne J.D."/>
            <person name="Weidman J.F."/>
            <person name="McDonald L.A."/>
            <person name="Utterback T.R."/>
            <person name="Cotton M.D."/>
            <person name="Spriggs T."/>
            <person name="Artiach P."/>
            <person name="Kaine B.P."/>
            <person name="Sykes S.M."/>
            <person name="Sadow P.W."/>
            <person name="D'Andrea K.P."/>
            <person name="Bowman C."/>
            <person name="Fujii C."/>
            <person name="Garland S.A."/>
            <person name="Mason T.M."/>
            <person name="Olsen G.J."/>
            <person name="Fraser C.M."/>
            <person name="Smith H.O."/>
            <person name="Woese C.R."/>
            <person name="Venter J.C."/>
        </authorList>
    </citation>
    <scope>NUCLEOTIDE SEQUENCE [LARGE SCALE GENOMIC DNA]</scope>
    <source>
        <strain>ATCC 49558 / DSM 4304 / JCM 9628 / NBRC 100126 / VC-16</strain>
    </source>
</reference>
<sequence length="117" mass="13100">MVEMESAKSVLEPLAWLMQMITGLLMILLVTAHFYVTHMTTHDALRYAEVVERVAQPEFKALYALLLLAVSFHAFNGLRAILLDTNAGMRKKGAVSALTTLAFLLAFFYGLYLLFSI</sequence>
<keyword id="KW-1003">Cell membrane</keyword>
<keyword id="KW-0249">Electron transport</keyword>
<keyword id="KW-0349">Heme</keyword>
<keyword id="KW-0408">Iron</keyword>
<keyword id="KW-0472">Membrane</keyword>
<keyword id="KW-0479">Metal-binding</keyword>
<keyword id="KW-1185">Reference proteome</keyword>
<keyword id="KW-0812">Transmembrane</keyword>
<keyword id="KW-1133">Transmembrane helix</keyword>
<keyword id="KW-0813">Transport</keyword>
<keyword id="KW-0816">Tricarboxylic acid cycle</keyword>
<organism>
    <name type="scientific">Archaeoglobus fulgidus (strain ATCC 49558 / DSM 4304 / JCM 9628 / NBRC 100126 / VC-16)</name>
    <dbReference type="NCBI Taxonomy" id="224325"/>
    <lineage>
        <taxon>Archaea</taxon>
        <taxon>Methanobacteriati</taxon>
        <taxon>Methanobacteriota</taxon>
        <taxon>Archaeoglobi</taxon>
        <taxon>Archaeoglobales</taxon>
        <taxon>Archaeoglobaceae</taxon>
        <taxon>Archaeoglobus</taxon>
    </lineage>
</organism>
<evidence type="ECO:0000250" key="1"/>
<evidence type="ECO:0000255" key="2"/>
<evidence type="ECO:0000305" key="3"/>
<gene>
    <name type="primary">sdhD</name>
    <name type="ordered locus">AF_0684</name>
</gene>
<dbReference type="EMBL" id="AE000782">
    <property type="protein sequence ID" value="AAB90554.1"/>
    <property type="molecule type" value="Genomic_DNA"/>
</dbReference>
<dbReference type="PIR" id="D69335">
    <property type="entry name" value="D69335"/>
</dbReference>
<dbReference type="SMR" id="O29573"/>
<dbReference type="STRING" id="224325.AF_0684"/>
<dbReference type="PaxDb" id="224325-AF_0684"/>
<dbReference type="EnsemblBacteria" id="AAB90554">
    <property type="protein sequence ID" value="AAB90554"/>
    <property type="gene ID" value="AF_0684"/>
</dbReference>
<dbReference type="KEGG" id="afu:AF_0684"/>
<dbReference type="eggNOG" id="arCOG04162">
    <property type="taxonomic scope" value="Archaea"/>
</dbReference>
<dbReference type="HOGENOM" id="CLU_145876_1_0_2"/>
<dbReference type="OrthoDB" id="187639at2157"/>
<dbReference type="PhylomeDB" id="O29573"/>
<dbReference type="UniPathway" id="UPA00223"/>
<dbReference type="Proteomes" id="UP000002199">
    <property type="component" value="Chromosome"/>
</dbReference>
<dbReference type="GO" id="GO:0005886">
    <property type="term" value="C:plasma membrane"/>
    <property type="evidence" value="ECO:0007669"/>
    <property type="project" value="UniProtKB-SubCell"/>
</dbReference>
<dbReference type="GO" id="GO:0009055">
    <property type="term" value="F:electron transfer activity"/>
    <property type="evidence" value="ECO:0007669"/>
    <property type="project" value="InterPro"/>
</dbReference>
<dbReference type="GO" id="GO:0046872">
    <property type="term" value="F:metal ion binding"/>
    <property type="evidence" value="ECO:0007669"/>
    <property type="project" value="UniProtKB-KW"/>
</dbReference>
<dbReference type="GO" id="GO:0006099">
    <property type="term" value="P:tricarboxylic acid cycle"/>
    <property type="evidence" value="ECO:0007669"/>
    <property type="project" value="UniProtKB-UniPathway"/>
</dbReference>
<dbReference type="CDD" id="cd03500">
    <property type="entry name" value="SQR_TypeA_SdhD_like"/>
    <property type="match status" value="1"/>
</dbReference>
<dbReference type="Gene3D" id="1.20.1300.10">
    <property type="entry name" value="Fumarate reductase/succinate dehydrogenase, transmembrane subunit"/>
    <property type="match status" value="1"/>
</dbReference>
<dbReference type="InterPro" id="IPR034804">
    <property type="entry name" value="SQR/QFR_C/D"/>
</dbReference>
<dbReference type="InterPro" id="IPR014314">
    <property type="entry name" value="Succ_DH_cytb556"/>
</dbReference>
<dbReference type="InterPro" id="IPR000701">
    <property type="entry name" value="SuccDH_FuR_B_TM-su"/>
</dbReference>
<dbReference type="Pfam" id="PF01127">
    <property type="entry name" value="Sdh_cyt"/>
    <property type="match status" value="1"/>
</dbReference>
<dbReference type="PIRSF" id="PIRSF000178">
    <property type="entry name" value="SDH_cyt_b560"/>
    <property type="match status" value="1"/>
</dbReference>
<dbReference type="SUPFAM" id="SSF81343">
    <property type="entry name" value="Fumarate reductase respiratory complex transmembrane subunits"/>
    <property type="match status" value="1"/>
</dbReference>
<comment type="function">
    <text evidence="1">Membrane-anchoring subunit of succinate dehydrogenase (SDH).</text>
</comment>
<comment type="cofactor">
    <cofactor evidence="1">
        <name>heme</name>
        <dbReference type="ChEBI" id="CHEBI:30413"/>
    </cofactor>
    <text evidence="1">The heme is bound between the two transmembrane subunits.</text>
</comment>
<comment type="pathway">
    <text>Carbohydrate metabolism; tricarboxylic acid cycle.</text>
</comment>
<comment type="subunit">
    <text evidence="1">Part of an enzyme complex containing four subunits: a flavoprotein, an iron-sulfur protein, plus two membrane-anchoring proteins, SdhC and SdhD.</text>
</comment>
<comment type="subcellular location">
    <subcellularLocation>
        <location evidence="3">Cell membrane</location>
        <topology evidence="3">Multi-pass membrane protein</topology>
    </subcellularLocation>
</comment>
<protein>
    <recommendedName>
        <fullName>Succinate dehydrogenase hydrophobic membrane anchor subunit</fullName>
    </recommendedName>
</protein>
<feature type="chain" id="PRO_0000158679" description="Succinate dehydrogenase hydrophobic membrane anchor subunit">
    <location>
        <begin position="1"/>
        <end position="117"/>
    </location>
</feature>
<feature type="topological domain" description="Cytoplasmic" evidence="2">
    <location>
        <begin position="1"/>
        <end position="15"/>
    </location>
</feature>
<feature type="transmembrane region" description="Helical" evidence="2">
    <location>
        <begin position="16"/>
        <end position="36"/>
    </location>
</feature>
<feature type="topological domain" description="Extracellular" evidence="2">
    <location>
        <begin position="37"/>
        <end position="61"/>
    </location>
</feature>
<feature type="transmembrane region" description="Helical" evidence="2">
    <location>
        <begin position="62"/>
        <end position="82"/>
    </location>
</feature>
<feature type="topological domain" description="Cytoplasmic" evidence="2">
    <location>
        <begin position="83"/>
        <end position="92"/>
    </location>
</feature>
<feature type="transmembrane region" description="Helical" evidence="2">
    <location>
        <begin position="93"/>
        <end position="115"/>
    </location>
</feature>
<feature type="binding site" description="axial binding residue" evidence="1">
    <location>
        <position position="73"/>
    </location>
    <ligand>
        <name>heme</name>
        <dbReference type="ChEBI" id="CHEBI:30413"/>
        <note>ligand shared with second transmembrane subunit</note>
    </ligand>
    <ligandPart>
        <name>Fe</name>
        <dbReference type="ChEBI" id="CHEBI:18248"/>
    </ligandPart>
</feature>
<accession>O29573</accession>
<name>DHSD_ARCFU</name>
<proteinExistence type="inferred from homology"/>